<organism>
    <name type="scientific">Populus jackii</name>
    <name type="common">Balm of Gilead</name>
    <name type="synonym">Populus deltoides x Populus balsamifera</name>
    <dbReference type="NCBI Taxonomy" id="640484"/>
    <lineage>
        <taxon>Eukaryota</taxon>
        <taxon>Viridiplantae</taxon>
        <taxon>Streptophyta</taxon>
        <taxon>Embryophyta</taxon>
        <taxon>Tracheophyta</taxon>
        <taxon>Spermatophyta</taxon>
        <taxon>Magnoliopsida</taxon>
        <taxon>eudicotyledons</taxon>
        <taxon>Gunneridae</taxon>
        <taxon>Pentapetalae</taxon>
        <taxon>rosids</taxon>
        <taxon>fabids</taxon>
        <taxon>Malpighiales</taxon>
        <taxon>Salicaceae</taxon>
        <taxon>Saliceae</taxon>
        <taxon>Populus</taxon>
    </lineage>
</organism>
<feature type="initiator methionine" description="Removed" evidence="5">
    <location>
        <position position="1"/>
    </location>
</feature>
<feature type="chain" id="PRO_0000341485" description="Thioredoxin H-type" evidence="5">
    <location>
        <begin position="2"/>
        <end position="139"/>
    </location>
</feature>
<feature type="domain" description="Thioredoxin" evidence="4">
    <location>
        <begin position="20"/>
        <end position="132"/>
    </location>
</feature>
<feature type="active site" description="Nucleophile" evidence="2">
    <location>
        <position position="58"/>
    </location>
</feature>
<feature type="active site" description="Nucleophile" evidence="2">
    <location>
        <position position="61"/>
    </location>
</feature>
<feature type="site" description="Contributes to redox potential value" evidence="2">
    <location>
        <position position="59"/>
    </location>
</feature>
<feature type="site" description="Contributes to redox potential value" evidence="2">
    <location>
        <position position="60"/>
    </location>
</feature>
<feature type="disulfide bond" description="Redox-active" evidence="2 4">
    <location>
        <begin position="58"/>
        <end position="61"/>
    </location>
</feature>
<feature type="strand" evidence="6">
    <location>
        <begin position="27"/>
        <end position="29"/>
    </location>
</feature>
<feature type="helix" evidence="6">
    <location>
        <begin position="32"/>
        <end position="45"/>
    </location>
</feature>
<feature type="strand" evidence="6">
    <location>
        <begin position="49"/>
        <end position="54"/>
    </location>
</feature>
<feature type="helix" evidence="6">
    <location>
        <begin position="59"/>
        <end position="74"/>
    </location>
</feature>
<feature type="strand" evidence="6">
    <location>
        <begin position="78"/>
        <end position="84"/>
    </location>
</feature>
<feature type="turn" evidence="6">
    <location>
        <begin position="85"/>
        <end position="87"/>
    </location>
</feature>
<feature type="helix" evidence="6">
    <location>
        <begin position="89"/>
        <end position="94"/>
    </location>
</feature>
<feature type="strand" evidence="6">
    <location>
        <begin position="99"/>
        <end position="107"/>
    </location>
</feature>
<feature type="strand" evidence="6">
    <location>
        <begin position="110"/>
        <end position="117"/>
    </location>
</feature>
<feature type="helix" evidence="6">
    <location>
        <begin position="120"/>
        <end position="132"/>
    </location>
</feature>
<feature type="turn" evidence="6">
    <location>
        <begin position="136"/>
        <end position="138"/>
    </location>
</feature>
<name>TRXH_POPJC</name>
<comment type="function">
    <text evidence="1">Participates in various redox reactions through the reversible oxidation of the active center dithiol to a disulfide. The H form is known to activate a number of cytosolic enzymes (By similarity).</text>
</comment>
<comment type="subcellular location">
    <subcellularLocation>
        <location evidence="1">Cytoplasm</location>
    </subcellularLocation>
</comment>
<comment type="mass spectrometry" mass="15515.375" error="0.3" method="Electrospray" evidence="5"/>
<comment type="similarity">
    <text evidence="3">Belongs to the thioredoxin family. Plant H-type subfamily.</text>
</comment>
<dbReference type="PDB" id="3D21">
    <property type="method" value="X-ray"/>
    <property type="resolution" value="2.15 A"/>
    <property type="chains" value="A/B=1-139"/>
</dbReference>
<dbReference type="PDB" id="3D22">
    <property type="method" value="X-ray"/>
    <property type="resolution" value="1.60 A"/>
    <property type="chains" value="A=1-139"/>
</dbReference>
<dbReference type="PDBsum" id="3D21"/>
<dbReference type="PDBsum" id="3D22"/>
<dbReference type="SMR" id="P85801"/>
<dbReference type="EvolutionaryTrace" id="P85801"/>
<dbReference type="GO" id="GO:0005737">
    <property type="term" value="C:cytoplasm"/>
    <property type="evidence" value="ECO:0007669"/>
    <property type="project" value="UniProtKB-SubCell"/>
</dbReference>
<dbReference type="CDD" id="cd02947">
    <property type="entry name" value="TRX_family"/>
    <property type="match status" value="1"/>
</dbReference>
<dbReference type="FunFam" id="3.40.30.10:FF:000245">
    <property type="entry name" value="Thioredoxin"/>
    <property type="match status" value="1"/>
</dbReference>
<dbReference type="Gene3D" id="3.40.30.10">
    <property type="entry name" value="Glutaredoxin"/>
    <property type="match status" value="1"/>
</dbReference>
<dbReference type="InterPro" id="IPR036249">
    <property type="entry name" value="Thioredoxin-like_sf"/>
</dbReference>
<dbReference type="InterPro" id="IPR017937">
    <property type="entry name" value="Thioredoxin_CS"/>
</dbReference>
<dbReference type="InterPro" id="IPR013766">
    <property type="entry name" value="Thioredoxin_domain"/>
</dbReference>
<dbReference type="InterPro" id="IPR050620">
    <property type="entry name" value="Thioredoxin_H-type-like"/>
</dbReference>
<dbReference type="PANTHER" id="PTHR10438">
    <property type="entry name" value="THIOREDOXIN"/>
    <property type="match status" value="1"/>
</dbReference>
<dbReference type="PANTHER" id="PTHR10438:SF462">
    <property type="entry name" value="THIOREDOXIN DOMAIN-CONTAINING PROTEIN"/>
    <property type="match status" value="1"/>
</dbReference>
<dbReference type="Pfam" id="PF00085">
    <property type="entry name" value="Thioredoxin"/>
    <property type="match status" value="1"/>
</dbReference>
<dbReference type="PRINTS" id="PR00421">
    <property type="entry name" value="THIOREDOXIN"/>
</dbReference>
<dbReference type="SUPFAM" id="SSF52833">
    <property type="entry name" value="Thioredoxin-like"/>
    <property type="match status" value="1"/>
</dbReference>
<dbReference type="PROSITE" id="PS00194">
    <property type="entry name" value="THIOREDOXIN_1"/>
    <property type="match status" value="1"/>
</dbReference>
<dbReference type="PROSITE" id="PS51352">
    <property type="entry name" value="THIOREDOXIN_2"/>
    <property type="match status" value="1"/>
</dbReference>
<proteinExistence type="evidence at protein level"/>
<sequence length="139" mass="15647">MGLCLAKRNHDADDDEPHIELAGGNVHLITTKERWDQKLSEASRDGKIVLANFSARWCGPCKQIAPYYIELSENYPSLMFLVIDVDELSDFSASWEIKATPTFFFLRDGQQVDKLVGANKPELHKKITAILDSLPPSDK</sequence>
<reference key="1">
    <citation type="journal article" date="2008" name="J. Biol. Chem.">
        <title>An atypical catalytic mechanism involving three cysteines of thioredoxin.</title>
        <authorList>
            <person name="Koh C.S."/>
            <person name="Navrot N."/>
            <person name="Didierjean C."/>
            <person name="Rouhier N."/>
            <person name="Hirasawa M."/>
            <person name="Knaff D.B."/>
            <person name="Wingsle G."/>
            <person name="Samian R."/>
            <person name="Jacquot J.-P."/>
            <person name="Corbier C."/>
            <person name="Gelhaye E."/>
        </authorList>
    </citation>
    <scope>PROTEIN SEQUENCE OF 2-139</scope>
    <scope>MASS SPECTROMETRY</scope>
    <scope>CLEAVAGE OF INITIATOR METHIONINE</scope>
    <source>
        <strain>cv. Beaupre</strain>
    </source>
</reference>
<keyword id="KW-0002">3D-structure</keyword>
<keyword id="KW-0963">Cytoplasm</keyword>
<keyword id="KW-0903">Direct protein sequencing</keyword>
<keyword id="KW-1015">Disulfide bond</keyword>
<keyword id="KW-0249">Electron transport</keyword>
<keyword id="KW-0676">Redox-active center</keyword>
<keyword id="KW-0813">Transport</keyword>
<evidence type="ECO:0000250" key="1">
    <source>
        <dbReference type="UniProtKB" id="O64394"/>
    </source>
</evidence>
<evidence type="ECO:0000250" key="2">
    <source>
        <dbReference type="UniProtKB" id="P10599"/>
    </source>
</evidence>
<evidence type="ECO:0000255" key="3"/>
<evidence type="ECO:0000255" key="4">
    <source>
        <dbReference type="PROSITE-ProRule" id="PRU00691"/>
    </source>
</evidence>
<evidence type="ECO:0000269" key="5">
    <source>
    </source>
</evidence>
<evidence type="ECO:0007829" key="6">
    <source>
        <dbReference type="PDB" id="3D22"/>
    </source>
</evidence>
<accession>P85801</accession>
<protein>
    <recommendedName>
        <fullName>Thioredoxin H-type</fullName>
    </recommendedName>
    <alternativeName>
        <fullName>Trxh4</fullName>
    </alternativeName>
</protein>